<gene>
    <name evidence="1" type="primary">lolD</name>
    <name type="ordered locus">XF_1077</name>
</gene>
<accession>P57032</accession>
<accession>Q9PEF1</accession>
<reference key="1">
    <citation type="journal article" date="2000" name="Nature">
        <title>The genome sequence of the plant pathogen Xylella fastidiosa.</title>
        <authorList>
            <person name="Simpson A.J.G."/>
            <person name="Reinach F.C."/>
            <person name="Arruda P."/>
            <person name="Abreu F.A."/>
            <person name="Acencio M."/>
            <person name="Alvarenga R."/>
            <person name="Alves L.M.C."/>
            <person name="Araya J.E."/>
            <person name="Baia G.S."/>
            <person name="Baptista C.S."/>
            <person name="Barros M.H."/>
            <person name="Bonaccorsi E.D."/>
            <person name="Bordin S."/>
            <person name="Bove J.M."/>
            <person name="Briones M.R.S."/>
            <person name="Bueno M.R.P."/>
            <person name="Camargo A.A."/>
            <person name="Camargo L.E.A."/>
            <person name="Carraro D.M."/>
            <person name="Carrer H."/>
            <person name="Colauto N.B."/>
            <person name="Colombo C."/>
            <person name="Costa F.F."/>
            <person name="Costa M.C.R."/>
            <person name="Costa-Neto C.M."/>
            <person name="Coutinho L.L."/>
            <person name="Cristofani M."/>
            <person name="Dias-Neto E."/>
            <person name="Docena C."/>
            <person name="El-Dorry H."/>
            <person name="Facincani A.P."/>
            <person name="Ferreira A.J.S."/>
            <person name="Ferreira V.C.A."/>
            <person name="Ferro J.A."/>
            <person name="Fraga J.S."/>
            <person name="Franca S.C."/>
            <person name="Franco M.C."/>
            <person name="Frohme M."/>
            <person name="Furlan L.R."/>
            <person name="Garnier M."/>
            <person name="Goldman G.H."/>
            <person name="Goldman M.H.S."/>
            <person name="Gomes S.L."/>
            <person name="Gruber A."/>
            <person name="Ho P.L."/>
            <person name="Hoheisel J.D."/>
            <person name="Junqueira M.L."/>
            <person name="Kemper E.L."/>
            <person name="Kitajima J.P."/>
            <person name="Krieger J.E."/>
            <person name="Kuramae E.E."/>
            <person name="Laigret F."/>
            <person name="Lambais M.R."/>
            <person name="Leite L.C.C."/>
            <person name="Lemos E.G.M."/>
            <person name="Lemos M.V.F."/>
            <person name="Lopes S.A."/>
            <person name="Lopes C.R."/>
            <person name="Machado J.A."/>
            <person name="Machado M.A."/>
            <person name="Madeira A.M.B.N."/>
            <person name="Madeira H.M.F."/>
            <person name="Marino C.L."/>
            <person name="Marques M.V."/>
            <person name="Martins E.A.L."/>
            <person name="Martins E.M.F."/>
            <person name="Matsukuma A.Y."/>
            <person name="Menck C.F.M."/>
            <person name="Miracca E.C."/>
            <person name="Miyaki C.Y."/>
            <person name="Monteiro-Vitorello C.B."/>
            <person name="Moon D.H."/>
            <person name="Nagai M.A."/>
            <person name="Nascimento A.L.T.O."/>
            <person name="Netto L.E.S."/>
            <person name="Nhani A. Jr."/>
            <person name="Nobrega F.G."/>
            <person name="Nunes L.R."/>
            <person name="Oliveira M.A."/>
            <person name="de Oliveira M.C."/>
            <person name="de Oliveira R.C."/>
            <person name="Palmieri D.A."/>
            <person name="Paris A."/>
            <person name="Peixoto B.R."/>
            <person name="Pereira G.A.G."/>
            <person name="Pereira H.A. Jr."/>
            <person name="Pesquero J.B."/>
            <person name="Quaggio R.B."/>
            <person name="Roberto P.G."/>
            <person name="Rodrigues V."/>
            <person name="de Rosa A.J.M."/>
            <person name="de Rosa V.E. Jr."/>
            <person name="de Sa R.G."/>
            <person name="Santelli R.V."/>
            <person name="Sawasaki H.E."/>
            <person name="da Silva A.C.R."/>
            <person name="da Silva A.M."/>
            <person name="da Silva F.R."/>
            <person name="Silva W.A. Jr."/>
            <person name="da Silveira J.F."/>
            <person name="Silvestri M.L.Z."/>
            <person name="Siqueira W.J."/>
            <person name="de Souza A.A."/>
            <person name="de Souza A.P."/>
            <person name="Terenzi M.F."/>
            <person name="Truffi D."/>
            <person name="Tsai S.M."/>
            <person name="Tsuhako M.H."/>
            <person name="Vallada H."/>
            <person name="Van Sluys M.A."/>
            <person name="Verjovski-Almeida S."/>
            <person name="Vettore A.L."/>
            <person name="Zago M.A."/>
            <person name="Zatz M."/>
            <person name="Meidanis J."/>
            <person name="Setubal J.C."/>
        </authorList>
    </citation>
    <scope>NUCLEOTIDE SEQUENCE [LARGE SCALE GENOMIC DNA]</scope>
    <source>
        <strain>9a5c</strain>
    </source>
</reference>
<dbReference type="EC" id="7.6.2.-" evidence="1"/>
<dbReference type="EMBL" id="AE003849">
    <property type="protein sequence ID" value="AAF83887.1"/>
    <property type="status" value="ALT_INIT"/>
    <property type="molecule type" value="Genomic_DNA"/>
</dbReference>
<dbReference type="PIR" id="B82726">
    <property type="entry name" value="B82726"/>
</dbReference>
<dbReference type="RefSeq" id="WP_023906833.1">
    <property type="nucleotide sequence ID" value="NC_002488.3"/>
</dbReference>
<dbReference type="SMR" id="P57032"/>
<dbReference type="STRING" id="160492.XF_1077"/>
<dbReference type="KEGG" id="xfa:XF_1077"/>
<dbReference type="eggNOG" id="COG1136">
    <property type="taxonomic scope" value="Bacteria"/>
</dbReference>
<dbReference type="HOGENOM" id="CLU_000604_1_22_6"/>
<dbReference type="Proteomes" id="UP000000812">
    <property type="component" value="Chromosome"/>
</dbReference>
<dbReference type="GO" id="GO:0005886">
    <property type="term" value="C:plasma membrane"/>
    <property type="evidence" value="ECO:0007669"/>
    <property type="project" value="UniProtKB-SubCell"/>
</dbReference>
<dbReference type="GO" id="GO:0005524">
    <property type="term" value="F:ATP binding"/>
    <property type="evidence" value="ECO:0007669"/>
    <property type="project" value="UniProtKB-KW"/>
</dbReference>
<dbReference type="GO" id="GO:0016887">
    <property type="term" value="F:ATP hydrolysis activity"/>
    <property type="evidence" value="ECO:0007669"/>
    <property type="project" value="InterPro"/>
</dbReference>
<dbReference type="GO" id="GO:0022857">
    <property type="term" value="F:transmembrane transporter activity"/>
    <property type="evidence" value="ECO:0007669"/>
    <property type="project" value="TreeGrafter"/>
</dbReference>
<dbReference type="GO" id="GO:0044874">
    <property type="term" value="P:lipoprotein localization to outer membrane"/>
    <property type="evidence" value="ECO:0007669"/>
    <property type="project" value="TreeGrafter"/>
</dbReference>
<dbReference type="GO" id="GO:0089705">
    <property type="term" value="P:protein localization to outer membrane"/>
    <property type="evidence" value="ECO:0007669"/>
    <property type="project" value="TreeGrafter"/>
</dbReference>
<dbReference type="CDD" id="cd03255">
    <property type="entry name" value="ABC_MJ0796_LolCDE_FtsE"/>
    <property type="match status" value="1"/>
</dbReference>
<dbReference type="FunFam" id="3.40.50.300:FF:000230">
    <property type="entry name" value="Lipoprotein-releasing system ATP-binding protein LolD"/>
    <property type="match status" value="1"/>
</dbReference>
<dbReference type="Gene3D" id="3.40.50.300">
    <property type="entry name" value="P-loop containing nucleotide triphosphate hydrolases"/>
    <property type="match status" value="1"/>
</dbReference>
<dbReference type="InterPro" id="IPR003593">
    <property type="entry name" value="AAA+_ATPase"/>
</dbReference>
<dbReference type="InterPro" id="IPR003439">
    <property type="entry name" value="ABC_transporter-like_ATP-bd"/>
</dbReference>
<dbReference type="InterPro" id="IPR017871">
    <property type="entry name" value="ABC_transporter-like_CS"/>
</dbReference>
<dbReference type="InterPro" id="IPR015854">
    <property type="entry name" value="ABC_transpr_LolD-like"/>
</dbReference>
<dbReference type="InterPro" id="IPR011924">
    <property type="entry name" value="LolD_lipo_ATP-bd"/>
</dbReference>
<dbReference type="InterPro" id="IPR017911">
    <property type="entry name" value="MacB-like_ATP-bd"/>
</dbReference>
<dbReference type="InterPro" id="IPR027417">
    <property type="entry name" value="P-loop_NTPase"/>
</dbReference>
<dbReference type="NCBIfam" id="TIGR02211">
    <property type="entry name" value="LolD_lipo_ex"/>
    <property type="match status" value="1"/>
</dbReference>
<dbReference type="PANTHER" id="PTHR24220">
    <property type="entry name" value="IMPORT ATP-BINDING PROTEIN"/>
    <property type="match status" value="1"/>
</dbReference>
<dbReference type="PANTHER" id="PTHR24220:SF689">
    <property type="entry name" value="LIPOPROTEIN-RELEASING SYSTEM ATP-BINDING PROTEIN LOLD"/>
    <property type="match status" value="1"/>
</dbReference>
<dbReference type="Pfam" id="PF00005">
    <property type="entry name" value="ABC_tran"/>
    <property type="match status" value="1"/>
</dbReference>
<dbReference type="SMART" id="SM00382">
    <property type="entry name" value="AAA"/>
    <property type="match status" value="1"/>
</dbReference>
<dbReference type="SUPFAM" id="SSF52540">
    <property type="entry name" value="P-loop containing nucleoside triphosphate hydrolases"/>
    <property type="match status" value="1"/>
</dbReference>
<dbReference type="PROSITE" id="PS00211">
    <property type="entry name" value="ABC_TRANSPORTER_1"/>
    <property type="match status" value="1"/>
</dbReference>
<dbReference type="PROSITE" id="PS50893">
    <property type="entry name" value="ABC_TRANSPORTER_2"/>
    <property type="match status" value="1"/>
</dbReference>
<dbReference type="PROSITE" id="PS51244">
    <property type="entry name" value="LOLD"/>
    <property type="match status" value="1"/>
</dbReference>
<proteinExistence type="inferred from homology"/>
<keyword id="KW-0067">ATP-binding</keyword>
<keyword id="KW-0997">Cell inner membrane</keyword>
<keyword id="KW-1003">Cell membrane</keyword>
<keyword id="KW-0472">Membrane</keyword>
<keyword id="KW-0547">Nucleotide-binding</keyword>
<keyword id="KW-1278">Translocase</keyword>
<keyword id="KW-0813">Transport</keyword>
<protein>
    <recommendedName>
        <fullName evidence="1">Lipoprotein-releasing system ATP-binding protein LolD</fullName>
        <ecNumber evidence="1">7.6.2.-</ecNumber>
    </recommendedName>
</protein>
<feature type="chain" id="PRO_0000092470" description="Lipoprotein-releasing system ATP-binding protein LolD">
    <location>
        <begin position="1"/>
        <end position="240"/>
    </location>
</feature>
<feature type="domain" description="ABC transporter" evidence="1">
    <location>
        <begin position="15"/>
        <end position="240"/>
    </location>
</feature>
<feature type="binding site" evidence="1">
    <location>
        <begin position="51"/>
        <end position="58"/>
    </location>
    <ligand>
        <name>ATP</name>
        <dbReference type="ChEBI" id="CHEBI:30616"/>
    </ligand>
</feature>
<sequence>MNERSTPQALTGPVIRAERLGKTYSEGKLLTQVFDGLDLQVMRGETVAIVGASGAGKSTLLHLLGGLDVPTAGEVYVAGQRMSALSDGDRGRLRNKTLGFIYQFHHLLPEFTALENVMMPVLLSGQSVCSGQMRAQMLLEAVELGHRLNYKPSELSGGERQRAAVARALANSPDCVLGDEPTGNLDNRTASTVFELMLELNRAQRTSLVLVTHDRGLARCLDRVLELYQGGLRELTSAEV</sequence>
<comment type="function">
    <text evidence="1">Part of the ABC transporter complex LolCDE involved in the translocation of mature outer membrane-directed lipoproteins, from the inner membrane to the periplasmic chaperone, LolA. Responsible for the formation of the LolA-lipoprotein complex in an ATP-dependent manner.</text>
</comment>
<comment type="subunit">
    <text evidence="1">The complex is composed of two ATP-binding proteins (LolD) and two transmembrane proteins (LolC and LolE).</text>
</comment>
<comment type="subcellular location">
    <subcellularLocation>
        <location evidence="1">Cell inner membrane</location>
        <topology evidence="1">Peripheral membrane protein</topology>
    </subcellularLocation>
</comment>
<comment type="similarity">
    <text evidence="1">Belongs to the ABC transporter superfamily. Lipoprotein translocase (TC 3.A.1.125) family.</text>
</comment>
<comment type="sequence caution" evidence="2">
    <conflict type="erroneous initiation">
        <sequence resource="EMBL-CDS" id="AAF83887"/>
    </conflict>
</comment>
<organism>
    <name type="scientific">Xylella fastidiosa (strain 9a5c)</name>
    <dbReference type="NCBI Taxonomy" id="160492"/>
    <lineage>
        <taxon>Bacteria</taxon>
        <taxon>Pseudomonadati</taxon>
        <taxon>Pseudomonadota</taxon>
        <taxon>Gammaproteobacteria</taxon>
        <taxon>Lysobacterales</taxon>
        <taxon>Lysobacteraceae</taxon>
        <taxon>Xylella</taxon>
    </lineage>
</organism>
<name>LOLD_XYLFA</name>
<evidence type="ECO:0000255" key="1">
    <source>
        <dbReference type="HAMAP-Rule" id="MF_01708"/>
    </source>
</evidence>
<evidence type="ECO:0000305" key="2"/>